<protein>
    <recommendedName>
        <fullName>t-SNARE affecting a late Golgi compartment protein 2</fullName>
    </recommendedName>
    <alternativeName>
        <fullName>Syntaxin tlg2</fullName>
    </alternativeName>
</protein>
<keyword id="KW-0175">Coiled coil</keyword>
<keyword id="KW-0967">Endosome</keyword>
<keyword id="KW-0333">Golgi apparatus</keyword>
<keyword id="KW-0472">Membrane</keyword>
<keyword id="KW-0653">Protein transport</keyword>
<keyword id="KW-1185">Reference proteome</keyword>
<keyword id="KW-0812">Transmembrane</keyword>
<keyword id="KW-1133">Transmembrane helix</keyword>
<keyword id="KW-0813">Transport</keyword>
<sequence length="301" mass="34441">MAYRDRTGLYITFRQSYSHHGQRLELSGWDPKEERQSLVHKDNKDNTVIEMDMLAPRWVTVEGEIDSLLLNTRRNINLLDKQYAKHVLPSFSDKTEQENEIQRLTIQITQDFQRCQKLLQVTKAQTNSATGSEALMAKNFLSNLASRIQTESAQFRKKQSTYLKKLRGLNANISPVESKLDETVSDVAISQSTIQQVALMEEQGEDEQAIRHERAVAKIAEGIIELAQMFQDLQVLVIEQGALVDRIDFNIEQTQVHAKSAEKELIKAESHQKNTGRLRFICFLILLIVALIVILAIKLLR</sequence>
<dbReference type="EMBL" id="CU329670">
    <property type="protein sequence ID" value="CAB90150.1"/>
    <property type="molecule type" value="Genomic_DNA"/>
</dbReference>
<dbReference type="RefSeq" id="NP_593832.1">
    <property type="nucleotide sequence ID" value="NM_001019261.2"/>
</dbReference>
<dbReference type="SMR" id="Q9P6P1"/>
<dbReference type="BioGRID" id="279856">
    <property type="interactions" value="20"/>
</dbReference>
<dbReference type="FunCoup" id="Q9P6P1">
    <property type="interactions" value="501"/>
</dbReference>
<dbReference type="STRING" id="284812.Q9P6P1"/>
<dbReference type="iPTMnet" id="Q9P6P1"/>
<dbReference type="PaxDb" id="4896-SPAC823.05c.1"/>
<dbReference type="EnsemblFungi" id="SPAC823.05c.1">
    <property type="protein sequence ID" value="SPAC823.05c.1:pep"/>
    <property type="gene ID" value="SPAC823.05c"/>
</dbReference>
<dbReference type="GeneID" id="2543436"/>
<dbReference type="KEGG" id="spo:2543436"/>
<dbReference type="PomBase" id="SPAC823.05c">
    <property type="gene designation" value="tlg2"/>
</dbReference>
<dbReference type="VEuPathDB" id="FungiDB:SPAC823.05c"/>
<dbReference type="eggNOG" id="KOG0809">
    <property type="taxonomic scope" value="Eukaryota"/>
</dbReference>
<dbReference type="HOGENOM" id="CLU_038177_0_0_1"/>
<dbReference type="InParanoid" id="Q9P6P1"/>
<dbReference type="OMA" id="NRKMCII"/>
<dbReference type="PhylomeDB" id="Q9P6P1"/>
<dbReference type="Reactome" id="R-SPO-6811440">
    <property type="pathway name" value="Retrograde transport at the Trans-Golgi-Network"/>
</dbReference>
<dbReference type="PRO" id="PR:Q9P6P1"/>
<dbReference type="Proteomes" id="UP000002485">
    <property type="component" value="Chromosome I"/>
</dbReference>
<dbReference type="GO" id="GO:0005829">
    <property type="term" value="C:cytosol"/>
    <property type="evidence" value="ECO:0007005"/>
    <property type="project" value="PomBase"/>
</dbReference>
<dbReference type="GO" id="GO:0012505">
    <property type="term" value="C:endomembrane system"/>
    <property type="evidence" value="ECO:0000318"/>
    <property type="project" value="GO_Central"/>
</dbReference>
<dbReference type="GO" id="GO:0010008">
    <property type="term" value="C:endosome membrane"/>
    <property type="evidence" value="ECO:0007669"/>
    <property type="project" value="UniProtKB-SubCell"/>
</dbReference>
<dbReference type="GO" id="GO:0005794">
    <property type="term" value="C:Golgi apparatus"/>
    <property type="evidence" value="ECO:0007005"/>
    <property type="project" value="PomBase"/>
</dbReference>
<dbReference type="GO" id="GO:0031201">
    <property type="term" value="C:SNARE complex"/>
    <property type="evidence" value="ECO:0000318"/>
    <property type="project" value="GO_Central"/>
</dbReference>
<dbReference type="GO" id="GO:0005484">
    <property type="term" value="F:SNAP receptor activity"/>
    <property type="evidence" value="ECO:0000318"/>
    <property type="project" value="GO_Central"/>
</dbReference>
<dbReference type="GO" id="GO:0000149">
    <property type="term" value="F:SNARE binding"/>
    <property type="evidence" value="ECO:0000318"/>
    <property type="project" value="GO_Central"/>
</dbReference>
<dbReference type="GO" id="GO:0006886">
    <property type="term" value="P:intracellular protein transport"/>
    <property type="evidence" value="ECO:0000318"/>
    <property type="project" value="GO_Central"/>
</dbReference>
<dbReference type="GO" id="GO:0048278">
    <property type="term" value="P:vesicle docking"/>
    <property type="evidence" value="ECO:0000318"/>
    <property type="project" value="GO_Central"/>
</dbReference>
<dbReference type="GO" id="GO:0006906">
    <property type="term" value="P:vesicle fusion"/>
    <property type="evidence" value="ECO:0000318"/>
    <property type="project" value="GO_Central"/>
</dbReference>
<dbReference type="CDD" id="cd15845">
    <property type="entry name" value="SNARE_syntaxin16"/>
    <property type="match status" value="1"/>
</dbReference>
<dbReference type="Gene3D" id="1.20.58.70">
    <property type="match status" value="1"/>
</dbReference>
<dbReference type="InterPro" id="IPR010989">
    <property type="entry name" value="SNARE"/>
</dbReference>
<dbReference type="InterPro" id="IPR045242">
    <property type="entry name" value="Syntaxin"/>
</dbReference>
<dbReference type="InterPro" id="IPR000727">
    <property type="entry name" value="T_SNARE_dom"/>
</dbReference>
<dbReference type="PANTHER" id="PTHR19957">
    <property type="entry name" value="SYNTAXIN"/>
    <property type="match status" value="1"/>
</dbReference>
<dbReference type="PANTHER" id="PTHR19957:SF83">
    <property type="entry name" value="SYNTAXIN-16"/>
    <property type="match status" value="1"/>
</dbReference>
<dbReference type="Pfam" id="PF05739">
    <property type="entry name" value="SNARE"/>
    <property type="match status" value="1"/>
</dbReference>
<dbReference type="SMART" id="SM00397">
    <property type="entry name" value="t_SNARE"/>
    <property type="match status" value="1"/>
</dbReference>
<dbReference type="SUPFAM" id="SSF47661">
    <property type="entry name" value="t-snare proteins"/>
    <property type="match status" value="1"/>
</dbReference>
<dbReference type="PROSITE" id="PS50192">
    <property type="entry name" value="T_SNARE"/>
    <property type="match status" value="1"/>
</dbReference>
<proteinExistence type="inferred from homology"/>
<accession>Q9P6P1</accession>
<feature type="chain" id="PRO_0000210278" description="t-SNARE affecting a late Golgi compartment protein 2">
    <location>
        <begin position="1"/>
        <end position="301"/>
    </location>
</feature>
<feature type="topological domain" description="Cytoplasmic" evidence="2">
    <location>
        <begin position="1"/>
        <end position="279"/>
    </location>
</feature>
<feature type="transmembrane region" description="Helical; Anchor for type IV membrane protein" evidence="2">
    <location>
        <begin position="280"/>
        <end position="300"/>
    </location>
</feature>
<feature type="topological domain" description="Vesicular" evidence="2">
    <location>
        <position position="301"/>
    </location>
</feature>
<feature type="domain" description="t-SNARE coiled-coil homology" evidence="3">
    <location>
        <begin position="206"/>
        <end position="268"/>
    </location>
</feature>
<feature type="coiled-coil region" evidence="2">
    <location>
        <begin position="92"/>
        <end position="120"/>
    </location>
</feature>
<organism>
    <name type="scientific">Schizosaccharomyces pombe (strain 972 / ATCC 24843)</name>
    <name type="common">Fission yeast</name>
    <dbReference type="NCBI Taxonomy" id="284812"/>
    <lineage>
        <taxon>Eukaryota</taxon>
        <taxon>Fungi</taxon>
        <taxon>Dikarya</taxon>
        <taxon>Ascomycota</taxon>
        <taxon>Taphrinomycotina</taxon>
        <taxon>Schizosaccharomycetes</taxon>
        <taxon>Schizosaccharomycetales</taxon>
        <taxon>Schizosaccharomycetaceae</taxon>
        <taxon>Schizosaccharomyces</taxon>
    </lineage>
</organism>
<evidence type="ECO:0000250" key="1"/>
<evidence type="ECO:0000255" key="2"/>
<evidence type="ECO:0000255" key="3">
    <source>
        <dbReference type="PROSITE-ProRule" id="PRU00202"/>
    </source>
</evidence>
<evidence type="ECO:0000305" key="4"/>
<name>TLG2_SCHPO</name>
<reference key="1">
    <citation type="journal article" date="2002" name="Nature">
        <title>The genome sequence of Schizosaccharomyces pombe.</title>
        <authorList>
            <person name="Wood V."/>
            <person name="Gwilliam R."/>
            <person name="Rajandream M.A."/>
            <person name="Lyne M.H."/>
            <person name="Lyne R."/>
            <person name="Stewart A."/>
            <person name="Sgouros J.G."/>
            <person name="Peat N."/>
            <person name="Hayles J."/>
            <person name="Baker S.G."/>
            <person name="Basham D."/>
            <person name="Bowman S."/>
            <person name="Brooks K."/>
            <person name="Brown D."/>
            <person name="Brown S."/>
            <person name="Chillingworth T."/>
            <person name="Churcher C.M."/>
            <person name="Collins M."/>
            <person name="Connor R."/>
            <person name="Cronin A."/>
            <person name="Davis P."/>
            <person name="Feltwell T."/>
            <person name="Fraser A."/>
            <person name="Gentles S."/>
            <person name="Goble A."/>
            <person name="Hamlin N."/>
            <person name="Harris D.E."/>
            <person name="Hidalgo J."/>
            <person name="Hodgson G."/>
            <person name="Holroyd S."/>
            <person name="Hornsby T."/>
            <person name="Howarth S."/>
            <person name="Huckle E.J."/>
            <person name="Hunt S."/>
            <person name="Jagels K."/>
            <person name="James K.D."/>
            <person name="Jones L."/>
            <person name="Jones M."/>
            <person name="Leather S."/>
            <person name="McDonald S."/>
            <person name="McLean J."/>
            <person name="Mooney P."/>
            <person name="Moule S."/>
            <person name="Mungall K.L."/>
            <person name="Murphy L.D."/>
            <person name="Niblett D."/>
            <person name="Odell C."/>
            <person name="Oliver K."/>
            <person name="O'Neil S."/>
            <person name="Pearson D."/>
            <person name="Quail M.A."/>
            <person name="Rabbinowitsch E."/>
            <person name="Rutherford K.M."/>
            <person name="Rutter S."/>
            <person name="Saunders D."/>
            <person name="Seeger K."/>
            <person name="Sharp S."/>
            <person name="Skelton J."/>
            <person name="Simmonds M.N."/>
            <person name="Squares R."/>
            <person name="Squares S."/>
            <person name="Stevens K."/>
            <person name="Taylor K."/>
            <person name="Taylor R.G."/>
            <person name="Tivey A."/>
            <person name="Walsh S.V."/>
            <person name="Warren T."/>
            <person name="Whitehead S."/>
            <person name="Woodward J.R."/>
            <person name="Volckaert G."/>
            <person name="Aert R."/>
            <person name="Robben J."/>
            <person name="Grymonprez B."/>
            <person name="Weltjens I."/>
            <person name="Vanstreels E."/>
            <person name="Rieger M."/>
            <person name="Schaefer M."/>
            <person name="Mueller-Auer S."/>
            <person name="Gabel C."/>
            <person name="Fuchs M."/>
            <person name="Duesterhoeft A."/>
            <person name="Fritzc C."/>
            <person name="Holzer E."/>
            <person name="Moestl D."/>
            <person name="Hilbert H."/>
            <person name="Borzym K."/>
            <person name="Langer I."/>
            <person name="Beck A."/>
            <person name="Lehrach H."/>
            <person name="Reinhardt R."/>
            <person name="Pohl T.M."/>
            <person name="Eger P."/>
            <person name="Zimmermann W."/>
            <person name="Wedler H."/>
            <person name="Wambutt R."/>
            <person name="Purnelle B."/>
            <person name="Goffeau A."/>
            <person name="Cadieu E."/>
            <person name="Dreano S."/>
            <person name="Gloux S."/>
            <person name="Lelaure V."/>
            <person name="Mottier S."/>
            <person name="Galibert F."/>
            <person name="Aves S.J."/>
            <person name="Xiang Z."/>
            <person name="Hunt C."/>
            <person name="Moore K."/>
            <person name="Hurst S.M."/>
            <person name="Lucas M."/>
            <person name="Rochet M."/>
            <person name="Gaillardin C."/>
            <person name="Tallada V.A."/>
            <person name="Garzon A."/>
            <person name="Thode G."/>
            <person name="Daga R.R."/>
            <person name="Cruzado L."/>
            <person name="Jimenez J."/>
            <person name="Sanchez M."/>
            <person name="del Rey F."/>
            <person name="Benito J."/>
            <person name="Dominguez A."/>
            <person name="Revuelta J.L."/>
            <person name="Moreno S."/>
            <person name="Armstrong J."/>
            <person name="Forsburg S.L."/>
            <person name="Cerutti L."/>
            <person name="Lowe T."/>
            <person name="McCombie W.R."/>
            <person name="Paulsen I."/>
            <person name="Potashkin J."/>
            <person name="Shpakovski G.V."/>
            <person name="Ussery D."/>
            <person name="Barrell B.G."/>
            <person name="Nurse P."/>
        </authorList>
    </citation>
    <scope>NUCLEOTIDE SEQUENCE [LARGE SCALE GENOMIC DNA]</scope>
    <source>
        <strain>972 / ATCC 24843</strain>
    </source>
</reference>
<gene>
    <name type="primary">tlg2</name>
    <name type="ORF">SPAC823.05c</name>
</gene>
<comment type="function">
    <text evidence="1">t-SNARE that functions in transport from the endosome to the late Golgi and on the endocytic pathway.</text>
</comment>
<comment type="subcellular location">
    <subcellularLocation>
        <location evidence="1">Golgi apparatus</location>
        <location evidence="1">trans-Golgi network membrane</location>
        <topology evidence="1">Single-pass type IV membrane protein</topology>
    </subcellularLocation>
    <subcellularLocation>
        <location evidence="1">Endosome membrane</location>
        <topology evidence="1">Single-pass type IV membrane protein</topology>
    </subcellularLocation>
</comment>
<comment type="similarity">
    <text evidence="4">Belongs to the syntaxin family.</text>
</comment>